<comment type="function">
    <text evidence="1">Alpha-conotoxins act on postsynaptic membranes, they bind to the nicotinic acetylcholine receptors (nAChR) and thus inhibit them.</text>
</comment>
<comment type="subcellular location">
    <subcellularLocation>
        <location evidence="3">Secreted</location>
    </subcellularLocation>
</comment>
<comment type="tissue specificity">
    <text evidence="6">Expressed by the venom duct.</text>
</comment>
<comment type="domain">
    <text evidence="5">The cysteine framework is XIV (C-C-C-C).</text>
</comment>
<comment type="mass spectrometry"/>
<comment type="similarity">
    <text evidence="2">Belongs to the conotoxin A superfamily.</text>
</comment>
<sequence>DGCPPHPVPGMHPCMCTNTC</sequence>
<organism>
    <name type="scientific">Conus tessulatus</name>
    <name type="common">Tessellate cone</name>
    <dbReference type="NCBI Taxonomy" id="101317"/>
    <lineage>
        <taxon>Eukaryota</taxon>
        <taxon>Metazoa</taxon>
        <taxon>Spiralia</taxon>
        <taxon>Lophotrochozoa</taxon>
        <taxon>Mollusca</taxon>
        <taxon>Gastropoda</taxon>
        <taxon>Caenogastropoda</taxon>
        <taxon>Neogastropoda</taxon>
        <taxon>Conoidea</taxon>
        <taxon>Conidae</taxon>
        <taxon>Conus</taxon>
        <taxon>Tesselliconus</taxon>
    </lineage>
</organism>
<protein>
    <recommendedName>
        <fullName evidence="4">Alpha-conotoxin-like ts14a</fullName>
    </recommendedName>
</protein>
<feature type="peptide" id="PRO_0000405802" description="Alpha-conotoxin-like ts14a" evidence="3">
    <location>
        <begin position="1"/>
        <end position="20"/>
    </location>
</feature>
<feature type="disulfide bond" evidence="3">
    <location>
        <begin position="3"/>
        <end position="16"/>
    </location>
</feature>
<feature type="disulfide bond" evidence="3">
    <location>
        <begin position="14"/>
        <end position="20"/>
    </location>
</feature>
<accession>P86362</accession>
<evidence type="ECO:0000250" key="1">
    <source>
        <dbReference type="UniProtKB" id="C6ZJQ2"/>
    </source>
</evidence>
<evidence type="ECO:0000255" key="2"/>
<evidence type="ECO:0000269" key="3">
    <source>
    </source>
</evidence>
<evidence type="ECO:0000303" key="4">
    <source>
    </source>
</evidence>
<evidence type="ECO:0000305" key="5"/>
<evidence type="ECO:0000305" key="6">
    <source>
    </source>
</evidence>
<keyword id="KW-0008">Acetylcholine receptor inhibiting toxin</keyword>
<keyword id="KW-0903">Direct protein sequencing</keyword>
<keyword id="KW-1015">Disulfide bond</keyword>
<keyword id="KW-0872">Ion channel impairing toxin</keyword>
<keyword id="KW-0528">Neurotoxin</keyword>
<keyword id="KW-0629">Postsynaptic neurotoxin</keyword>
<keyword id="KW-0964">Secreted</keyword>
<keyword id="KW-0800">Toxin</keyword>
<name>CAEA_CONTS</name>
<dbReference type="GO" id="GO:0005576">
    <property type="term" value="C:extracellular region"/>
    <property type="evidence" value="ECO:0000314"/>
    <property type="project" value="UniProtKB"/>
</dbReference>
<dbReference type="GO" id="GO:0035792">
    <property type="term" value="C:host cell postsynaptic membrane"/>
    <property type="evidence" value="ECO:0007669"/>
    <property type="project" value="UniProtKB-KW"/>
</dbReference>
<dbReference type="GO" id="GO:0030550">
    <property type="term" value="F:acetylcholine receptor inhibitor activity"/>
    <property type="evidence" value="ECO:0000250"/>
    <property type="project" value="UniProtKB"/>
</dbReference>
<dbReference type="GO" id="GO:0099106">
    <property type="term" value="F:ion channel regulator activity"/>
    <property type="evidence" value="ECO:0007669"/>
    <property type="project" value="UniProtKB-KW"/>
</dbReference>
<dbReference type="GO" id="GO:0090729">
    <property type="term" value="F:toxin activity"/>
    <property type="evidence" value="ECO:0000250"/>
    <property type="project" value="UniProtKB"/>
</dbReference>
<proteinExistence type="evidence at protein level"/>
<reference key="1">
    <citation type="journal article" date="2010" name="Peptides">
        <title>A new subfamily of conotoxins belonging to the A-superfamily.</title>
        <authorList>
            <person name="Peng C."/>
            <person name="Ye M."/>
            <person name="Wang Y."/>
            <person name="Shao X."/>
            <person name="Yuan D."/>
            <person name="Liu J."/>
            <person name="Hawrot E."/>
            <person name="Wang C."/>
            <person name="Chi C."/>
        </authorList>
    </citation>
    <scope>PROTEIN SEQUENCE</scope>
    <scope>SUBCELLULAR LOCATION</scope>
    <scope>MASS SPECTROMETRY</scope>
    <scope>DISULFIDE BONDS</scope>
    <source>
        <tissue>Venom</tissue>
    </source>
</reference>